<reference key="1">
    <citation type="journal article" date="1992" name="EMBO J.">
        <title>A second tyrosinase-related protein, TRP-2, maps to and is mutated at the mouse slaty locus.</title>
        <authorList>
            <person name="Jackson I.J."/>
            <person name="Chambers D.M."/>
            <person name="Tsukamoto K."/>
            <person name="Copeland N.G."/>
            <person name="Gilbert D.J."/>
            <person name="Jenkins N.A."/>
            <person name="Hearing V.J."/>
        </authorList>
    </citation>
    <scope>NUCLEOTIDE SEQUENCE [MRNA]</scope>
    <scope>FUNCTION</scope>
    <scope>TISSUE SPECIFICITY</scope>
    <scope>INVOLVEMENT IN SLATY</scope>
    <scope>VARIANT SLATY GLN-194</scope>
</reference>
<reference key="2">
    <citation type="journal article" date="2009" name="PLoS Biol.">
        <title>Lineage-specific biology revealed by a finished genome assembly of the mouse.</title>
        <authorList>
            <person name="Church D.M."/>
            <person name="Goodstadt L."/>
            <person name="Hillier L.W."/>
            <person name="Zody M.C."/>
            <person name="Goldstein S."/>
            <person name="She X."/>
            <person name="Bult C.J."/>
            <person name="Agarwala R."/>
            <person name="Cherry J.L."/>
            <person name="DiCuccio M."/>
            <person name="Hlavina W."/>
            <person name="Kapustin Y."/>
            <person name="Meric P."/>
            <person name="Maglott D."/>
            <person name="Birtle Z."/>
            <person name="Marques A.C."/>
            <person name="Graves T."/>
            <person name="Zhou S."/>
            <person name="Teague B."/>
            <person name="Potamousis K."/>
            <person name="Churas C."/>
            <person name="Place M."/>
            <person name="Herschleb J."/>
            <person name="Runnheim R."/>
            <person name="Forrest D."/>
            <person name="Amos-Landgraf J."/>
            <person name="Schwartz D.C."/>
            <person name="Cheng Z."/>
            <person name="Lindblad-Toh K."/>
            <person name="Eichler E.E."/>
            <person name="Ponting C.P."/>
        </authorList>
    </citation>
    <scope>NUCLEOTIDE SEQUENCE [LARGE SCALE GENOMIC DNA]</scope>
    <source>
        <strain>C57BL/6J</strain>
    </source>
</reference>
<reference key="3">
    <citation type="journal article" date="2004" name="Genome Res.">
        <title>The status, quality, and expansion of the NIH full-length cDNA project: the Mammalian Gene Collection (MGC).</title>
        <authorList>
            <consortium name="The MGC Project Team"/>
        </authorList>
    </citation>
    <scope>NUCLEOTIDE SEQUENCE [LARGE SCALE MRNA]</scope>
    <source>
        <strain>C57BL/6J</strain>
        <tissue>Eye</tissue>
    </source>
</reference>
<reference key="4">
    <citation type="journal article" date="1995" name="Genomics">
        <title>Structure of the mouse tyrosinase-related protein-2/dopachrome tautomerase (Tyrp2/Dct) gene and sequence of two novel slaty alleles.</title>
        <authorList>
            <person name="Budd P.S."/>
            <person name="Jackson I.J."/>
        </authorList>
    </citation>
    <scope>NUCLEOTIDE SEQUENCE [GENOMIC DNA] OF 1-98</scope>
    <scope>VARIANT SLATY-2J LEU-434</scope>
    <scope>VARIANT SLATY-LT ARG-486</scope>
    <source>
        <strain>129/Sv</strain>
    </source>
</reference>
<reference key="5">
    <citation type="journal article" date="1992" name="EMBO J.">
        <title>A second tyrosinase-related protein, TRP-2, is a melanogenic enzyme termed DOPAchrome tautomerase.</title>
        <authorList>
            <person name="Tsukamoto K."/>
            <person name="Jackson I.J."/>
            <person name="Urabe K."/>
            <person name="Montague P.M."/>
            <person name="Hearing V.J."/>
        </authorList>
    </citation>
    <scope>FUNCTION</scope>
    <scope>CATALYTIC ACTIVITY</scope>
    <scope>GLYCOSYLATION</scope>
</reference>
<reference key="6">
    <citation type="journal article" date="1994" name="Biochem. Biophys. Res. Commun.">
        <title>Dopachrome tautomerase is a zinc-containing enzyme.</title>
        <authorList>
            <person name="Solano F."/>
            <person name="Martinez-Liarte J.H."/>
            <person name="Jimenez-Cervantes C."/>
            <person name="Garcia-Borron J.C."/>
            <person name="Lozano J.A."/>
        </authorList>
    </citation>
    <scope>ZINC-BINDING</scope>
</reference>
<reference key="7">
    <citation type="journal article" date="1996" name="Biochem. J.">
        <title>Molecular mechanism for catalysis by a new zinc-enzyme, dopachrome tautomerase.</title>
        <authorList>
            <person name="Solano F."/>
            <person name="Jimenez-Cervantes C."/>
            <person name="Martinez-Liarte J.H."/>
            <person name="Garcia-Borron J.C."/>
            <person name="Jara J.R."/>
            <person name="Lozano J.A."/>
        </authorList>
    </citation>
    <scope>ZINC-BINDING</scope>
</reference>
<reference key="8">
    <citation type="journal article" date="2016" name="J. Biol. Chem.">
        <title>RUTBC1 functions as a GTPase-activating protein for Rab32/38 and regulates melanogenic enzyme trafficking in melanocytes.</title>
        <authorList>
            <person name="Marubashi S."/>
            <person name="Shimada H."/>
            <person name="Fukuda M."/>
            <person name="Ohbayashi N."/>
        </authorList>
    </citation>
    <scope>SUBCELLULAR LOCATION</scope>
</reference>
<reference key="9">
    <citation type="journal article" date="2021" name="Genet. Med.">
        <title>Dopachrome tautomerase variants in patients with oculocutaneous albinism.</title>
        <authorList>
            <person name="Pennamen P."/>
            <person name="Tingaud-Sequeira A."/>
            <person name="Gazova I."/>
            <person name="Keighren M."/>
            <person name="McKie L."/>
            <person name="Marlin S."/>
            <person name="Gherbi Halem S."/>
            <person name="Kaplan J."/>
            <person name="Delevoye C."/>
            <person name="Lacombe D."/>
            <person name="Plaisant C."/>
            <person name="Michaud V."/>
            <person name="Lasseaux E."/>
            <person name="Javerzat S."/>
            <person name="Jackson I."/>
            <person name="Arveiler B."/>
        </authorList>
    </citation>
    <scope>FUNCTION</scope>
    <scope>DISRUPTION PHENOTYPE</scope>
    <scope>MUTAGENESIS OF CYS-40 AND CYS-61</scope>
</reference>
<accession>P29812</accession>
<accession>Q6NXI2</accession>
<evidence type="ECO:0000250" key="1"/>
<evidence type="ECO:0000250" key="2">
    <source>
        <dbReference type="UniProtKB" id="P40126"/>
    </source>
</evidence>
<evidence type="ECO:0000255" key="3"/>
<evidence type="ECO:0000269" key="4">
    <source>
    </source>
</evidence>
<evidence type="ECO:0000269" key="5">
    <source>
    </source>
</evidence>
<evidence type="ECO:0000269" key="6">
    <source>
    </source>
</evidence>
<evidence type="ECO:0000269" key="7">
    <source>
    </source>
</evidence>
<evidence type="ECO:0000269" key="8">
    <source>
    </source>
</evidence>
<evidence type="ECO:0000269" key="9">
    <source>
    </source>
</evidence>
<evidence type="ECO:0000269" key="10">
    <source>
    </source>
</evidence>
<evidence type="ECO:0000303" key="11">
    <source>
    </source>
</evidence>
<evidence type="ECO:0000305" key="12"/>
<evidence type="ECO:0000312" key="13">
    <source>
        <dbReference type="MGI" id="MGI:102563"/>
    </source>
</evidence>
<gene>
    <name evidence="13" type="primary">Dct</name>
    <name type="synonym">Tyrp-2</name>
    <name type="synonym">Tyrp2</name>
</gene>
<organism>
    <name type="scientific">Mus musculus</name>
    <name type="common">Mouse</name>
    <dbReference type="NCBI Taxonomy" id="10090"/>
    <lineage>
        <taxon>Eukaryota</taxon>
        <taxon>Metazoa</taxon>
        <taxon>Chordata</taxon>
        <taxon>Craniata</taxon>
        <taxon>Vertebrata</taxon>
        <taxon>Euteleostomi</taxon>
        <taxon>Mammalia</taxon>
        <taxon>Eutheria</taxon>
        <taxon>Euarchontoglires</taxon>
        <taxon>Glires</taxon>
        <taxon>Rodentia</taxon>
        <taxon>Myomorpha</taxon>
        <taxon>Muroidea</taxon>
        <taxon>Muridae</taxon>
        <taxon>Murinae</taxon>
        <taxon>Mus</taxon>
        <taxon>Mus</taxon>
    </lineage>
</organism>
<proteinExistence type="evidence at protein level"/>
<keyword id="KW-0225">Disease variant</keyword>
<keyword id="KW-0325">Glycoprotein</keyword>
<keyword id="KW-0413">Isomerase</keyword>
<keyword id="KW-0470">Melanin biosynthesis</keyword>
<keyword id="KW-0472">Membrane</keyword>
<keyword id="KW-0479">Metal-binding</keyword>
<keyword id="KW-1185">Reference proteome</keyword>
<keyword id="KW-0732">Signal</keyword>
<keyword id="KW-0812">Transmembrane</keyword>
<keyword id="KW-1133">Transmembrane helix</keyword>
<keyword id="KW-0862">Zinc</keyword>
<sequence length="517" mass="58510">MGLVGWGLLLGCLGCGILLRARAQFPRVCMTLDGVLNKECCPPLGPEATNICGFLEGRGQCAEVQTDTRPWSGPYILRNQDDREQWPRKFFNRTCKCTGNFAGYNCGGCKFGWTGPDCNRKKPAILRRNIHSLTAQEREQFLGALDLAKKSIHPDYVITTQHWLGLLGPNGTQPQIANCSVYDFFVWLHYYSVRDTLLGPGRPYKAIDFSHQGPAFVTWHRYHLLWLERELQRLTGNESFALPYWNFATGKNECDVCTDELLGAARQDDPTLISRNSRFSTWEIVCDSLDDYNRRVTLCNGTYEGLLRRNKVGRNNEKLPTLKNVQDCLSLQKFDSPPFFQNSTFSFRNALEGFDKADGTLDSQVMNLHNLAHSFLNGTNALPHSAANDPVFVVLHSFTDAIFDEWLKRNNPSTDAWPQELAPIGHNRMYNMVPFFPPVTNEELFLTAEQLGYNYAVDLSEEEAPVWSTTLSVVIGILGAFVLLLGLLAFLQYRRLRKGYAPLMETGLSSKRYTEEA</sequence>
<comment type="function">
    <text evidence="4 5 7">Plays a role in melanin biosynthesis (PubMed:33100333). Catalyzes the conversion of L-dopachrome into 5,6-dihydroxyindole-2-carboxylic acid (DHICA) (PubMed:1537333, PubMed:1537334).</text>
</comment>
<comment type="catalytic activity">
    <reaction evidence="4">
        <text>L-dopachrome = 5,6-dihydroxyindole-2-carboxylate</text>
        <dbReference type="Rhea" id="RHEA:13041"/>
        <dbReference type="ChEBI" id="CHEBI:16875"/>
        <dbReference type="ChEBI" id="CHEBI:57509"/>
        <dbReference type="EC" id="5.3.3.12"/>
    </reaction>
</comment>
<comment type="cofactor">
    <cofactor evidence="8 10">
        <name>Zn(2+)</name>
        <dbReference type="ChEBI" id="CHEBI:29105"/>
    </cofactor>
    <text evidence="8 10">Binds 2 Zn(2+) ions per subunit.</text>
</comment>
<comment type="pathway">
    <text>Pigment biosynthesis; melanin biosynthesis.</text>
</comment>
<comment type="subunit">
    <text evidence="2">Forms an OPN3-dependent complex with TYR in response to blue light in melanocytes.</text>
</comment>
<comment type="subcellular location">
    <subcellularLocation>
        <location evidence="2">Melanosome membrane</location>
        <topology evidence="2">Single-pass type I membrane protein</topology>
    </subcellularLocation>
    <subcellularLocation>
        <location evidence="6">Melanosome</location>
    </subcellularLocation>
    <text evidence="6">Proper trafficking to melanosome is regulated by SGSM2, ANKRD27, RAB9A, RAB32 and RAB38.</text>
</comment>
<comment type="tissue specificity">
    <text evidence="5">Melanocytes and retinal pigmented epithelium (at protein level).</text>
</comment>
<comment type="PTM">
    <text evidence="4">Glycosylated.</text>
</comment>
<comment type="disease">
    <text evidence="5 9">The slaty mutation in Tyrp2 leads to a decrease of DT activity and a consequent change in the pigmentation of the mice to a dark gray/brown eumelanin. The slaty-2j mutation has a similar phenotype, the slaty-lt (light) mutation has a more severe effect and is semidominant; its phenotype may be a result of the failure of the enzyme to be correctly targeted to its normal location on the inner face of the melanosomal membrane.</text>
</comment>
<comment type="disruption phenotype">
    <text evidence="7">Mutant mice show hypopigmentation of the coat and have the retinal pigmented epithelium significantly less pigmented than wild-type retinas.</text>
</comment>
<comment type="similarity">
    <text evidence="12">Belongs to the tyrosinase family.</text>
</comment>
<feature type="signal peptide" evidence="3">
    <location>
        <begin position="1"/>
        <end position="23"/>
    </location>
</feature>
<feature type="chain" id="PRO_0000035893" description="L-dopachrome tautomerase">
    <location>
        <begin position="24"/>
        <end position="517"/>
    </location>
</feature>
<feature type="topological domain" description="Lumenal, melanosome" evidence="3">
    <location>
        <begin position="24"/>
        <end position="472"/>
    </location>
</feature>
<feature type="transmembrane region" description="Helical" evidence="3">
    <location>
        <begin position="473"/>
        <end position="491"/>
    </location>
</feature>
<feature type="topological domain" description="Cytoplasmic" evidence="3">
    <location>
        <begin position="492"/>
        <end position="517"/>
    </location>
</feature>
<feature type="binding site" evidence="1">
    <location>
        <position position="189"/>
    </location>
    <ligand>
        <name>Zn(2+)</name>
        <dbReference type="ChEBI" id="CHEBI:29105"/>
        <label>A</label>
    </ligand>
</feature>
<feature type="binding site" evidence="1">
    <location>
        <position position="211"/>
    </location>
    <ligand>
        <name>Zn(2+)</name>
        <dbReference type="ChEBI" id="CHEBI:29105"/>
        <label>A</label>
    </ligand>
</feature>
<feature type="binding site" evidence="1">
    <location>
        <position position="220"/>
    </location>
    <ligand>
        <name>Zn(2+)</name>
        <dbReference type="ChEBI" id="CHEBI:29105"/>
        <label>A</label>
    </ligand>
</feature>
<feature type="binding site" evidence="1">
    <location>
        <position position="369"/>
    </location>
    <ligand>
        <name>Zn(2+)</name>
        <dbReference type="ChEBI" id="CHEBI:29105"/>
        <label>B</label>
    </ligand>
</feature>
<feature type="binding site" evidence="1">
    <location>
        <position position="373"/>
    </location>
    <ligand>
        <name>Zn(2+)</name>
        <dbReference type="ChEBI" id="CHEBI:29105"/>
        <label>B</label>
    </ligand>
</feature>
<feature type="binding site" evidence="1">
    <location>
        <position position="396"/>
    </location>
    <ligand>
        <name>Zn(2+)</name>
        <dbReference type="ChEBI" id="CHEBI:29105"/>
        <label>B</label>
    </ligand>
</feature>
<feature type="glycosylation site" description="N-linked (GlcNAc...) asparagine" evidence="3">
    <location>
        <position position="92"/>
    </location>
</feature>
<feature type="glycosylation site" description="N-linked (GlcNAc...) asparagine" evidence="3">
    <location>
        <position position="170"/>
    </location>
</feature>
<feature type="glycosylation site" description="N-linked (GlcNAc...) asparagine" evidence="3">
    <location>
        <position position="178"/>
    </location>
</feature>
<feature type="glycosylation site" description="N-linked (GlcNAc...) asparagine" evidence="3">
    <location>
        <position position="237"/>
    </location>
</feature>
<feature type="glycosylation site" description="N-linked (GlcNAc...) asparagine" evidence="3">
    <location>
        <position position="300"/>
    </location>
</feature>
<feature type="glycosylation site" description="N-linked (GlcNAc...) asparagine" evidence="3">
    <location>
        <position position="342"/>
    </location>
</feature>
<feature type="glycosylation site" description="N-linked (GlcNAc...) asparagine" evidence="3">
    <location>
        <position position="377"/>
    </location>
</feature>
<feature type="sequence variant" description="In slaty; decreased DOPAchrome tautomerase activity." evidence="5">
    <original>R</original>
    <variation>Q</variation>
    <location>
        <position position="194"/>
    </location>
</feature>
<feature type="sequence variant" description="In slaty-2j." evidence="9">
    <original>P</original>
    <variation>L</variation>
    <location>
        <position position="434"/>
    </location>
</feature>
<feature type="sequence variant" description="In slaty-lt." evidence="9">
    <original>G</original>
    <variation>R</variation>
    <location>
        <position position="486"/>
    </location>
</feature>
<feature type="mutagenesis site" description="Mutant mice show hypopigmentation of the coat and have the retinal pigmented epithelium significantly less pigmented than wild-type retinas." evidence="7">
    <original>C</original>
    <variation>S</variation>
    <location>
        <position position="40"/>
    </location>
</feature>
<feature type="mutagenesis site" description="Mutant mice show hypopigmentation of the coat and have the retinal pigmented epithelium significantly less pigmented than wild-type retinas." evidence="7">
    <original>C</original>
    <variation>W</variation>
    <location>
        <position position="61"/>
    </location>
</feature>
<feature type="sequence conflict" description="In Ref. 1; CAA44951." evidence="12" ref="1">
    <original>EL</original>
    <variation>DW</variation>
    <location>
        <begin position="260"/>
        <end position="261"/>
    </location>
</feature>
<name>TYRP2_MOUSE</name>
<protein>
    <recommendedName>
        <fullName evidence="12">L-dopachrome tautomerase</fullName>
        <shortName>DCT</shortName>
        <shortName>DT</shortName>
        <ecNumber evidence="4">5.3.3.12</ecNumber>
    </recommendedName>
    <alternativeName>
        <fullName evidence="11">DOPAchrome conversion factor</fullName>
    </alternativeName>
    <alternativeName>
        <fullName evidence="11">DOPAchrome isomerase</fullName>
    </alternativeName>
    <alternativeName>
        <fullName evidence="11">DOPAchrome oxidoreductase</fullName>
    </alternativeName>
    <alternativeName>
        <fullName>L-dopachrome Delta-isomerase</fullName>
    </alternativeName>
    <alternativeName>
        <fullName>SLATY locus protein</fullName>
    </alternativeName>
    <alternativeName>
        <fullName>Tyrosinase-related protein 2</fullName>
        <shortName>TRP-2</shortName>
        <shortName>TRP2</shortName>
    </alternativeName>
</protein>
<dbReference type="EC" id="5.3.3.12" evidence="4"/>
<dbReference type="EMBL" id="X63349">
    <property type="protein sequence ID" value="CAA44951.1"/>
    <property type="molecule type" value="mRNA"/>
</dbReference>
<dbReference type="EMBL" id="CT025675">
    <property type="status" value="NOT_ANNOTATED_CDS"/>
    <property type="molecule type" value="Genomic_DNA"/>
</dbReference>
<dbReference type="EMBL" id="BC067064">
    <property type="protein sequence ID" value="AAH67064.1"/>
    <property type="molecule type" value="mRNA"/>
</dbReference>
<dbReference type="EMBL" id="BC082330">
    <property type="protein sequence ID" value="AAH82330.1"/>
    <property type="molecule type" value="mRNA"/>
</dbReference>
<dbReference type="EMBL" id="X85126">
    <property type="protein sequence ID" value="CAA59440.1"/>
    <property type="molecule type" value="Genomic_DNA"/>
</dbReference>
<dbReference type="CCDS" id="CCDS27331.1"/>
<dbReference type="PIR" id="S19243">
    <property type="entry name" value="S19243"/>
</dbReference>
<dbReference type="RefSeq" id="NP_034154.2">
    <property type="nucleotide sequence ID" value="NM_010024.3"/>
</dbReference>
<dbReference type="SMR" id="P29812"/>
<dbReference type="FunCoup" id="P29812">
    <property type="interactions" value="263"/>
</dbReference>
<dbReference type="STRING" id="10090.ENSMUSP00000022725"/>
<dbReference type="GlyCosmos" id="P29812">
    <property type="glycosylation" value="7 sites, No reported glycans"/>
</dbReference>
<dbReference type="GlyGen" id="P29812">
    <property type="glycosylation" value="7 sites"/>
</dbReference>
<dbReference type="iPTMnet" id="P29812"/>
<dbReference type="PhosphoSitePlus" id="P29812"/>
<dbReference type="PaxDb" id="10090-ENSMUSP00000022725"/>
<dbReference type="ProteomicsDB" id="297765"/>
<dbReference type="TopDownProteomics" id="P29812"/>
<dbReference type="Antibodypedia" id="2252">
    <property type="antibodies" value="415 antibodies from 34 providers"/>
</dbReference>
<dbReference type="DNASU" id="13190"/>
<dbReference type="Ensembl" id="ENSMUST00000022725.4">
    <property type="protein sequence ID" value="ENSMUSP00000022725.3"/>
    <property type="gene ID" value="ENSMUSG00000022129.5"/>
</dbReference>
<dbReference type="GeneID" id="13190"/>
<dbReference type="KEGG" id="mmu:13190"/>
<dbReference type="UCSC" id="uc007uym.2">
    <property type="organism name" value="mouse"/>
</dbReference>
<dbReference type="AGR" id="MGI:102563"/>
<dbReference type="CTD" id="1638"/>
<dbReference type="MGI" id="MGI:102563">
    <property type="gene designation" value="Dct"/>
</dbReference>
<dbReference type="VEuPathDB" id="HostDB:ENSMUSG00000022129"/>
<dbReference type="eggNOG" id="ENOG502QRNA">
    <property type="taxonomic scope" value="Eukaryota"/>
</dbReference>
<dbReference type="GeneTree" id="ENSGT00940000156856"/>
<dbReference type="HOGENOM" id="CLU_038693_1_0_1"/>
<dbReference type="InParanoid" id="P29812"/>
<dbReference type="OMA" id="FFNRTCK"/>
<dbReference type="OrthoDB" id="6132182at2759"/>
<dbReference type="PhylomeDB" id="P29812"/>
<dbReference type="TreeFam" id="TF315865"/>
<dbReference type="BioCyc" id="MetaCyc:X01347-MONOMER"/>
<dbReference type="Reactome" id="R-MMU-5662702">
    <property type="pathway name" value="Melanin biosynthesis"/>
</dbReference>
<dbReference type="UniPathway" id="UPA00785"/>
<dbReference type="BioGRID-ORCS" id="13190">
    <property type="hits" value="3 hits in 77 CRISPR screens"/>
</dbReference>
<dbReference type="ChiTaRS" id="Dct">
    <property type="organism name" value="mouse"/>
</dbReference>
<dbReference type="PRO" id="PR:P29812"/>
<dbReference type="Proteomes" id="UP000000589">
    <property type="component" value="Chromosome 14"/>
</dbReference>
<dbReference type="RNAct" id="P29812">
    <property type="molecule type" value="protein"/>
</dbReference>
<dbReference type="Bgee" id="ENSMUSG00000022129">
    <property type="expression patterns" value="Expressed in iris and 127 other cell types or tissues"/>
</dbReference>
<dbReference type="GO" id="GO:0005737">
    <property type="term" value="C:cytoplasm"/>
    <property type="evidence" value="ECO:0000314"/>
    <property type="project" value="UniProtKB"/>
</dbReference>
<dbReference type="GO" id="GO:0005829">
    <property type="term" value="C:cytosol"/>
    <property type="evidence" value="ECO:0000314"/>
    <property type="project" value="UniProtKB"/>
</dbReference>
<dbReference type="GO" id="GO:0042470">
    <property type="term" value="C:melanosome"/>
    <property type="evidence" value="ECO:0000314"/>
    <property type="project" value="UniProtKB"/>
</dbReference>
<dbReference type="GO" id="GO:0033162">
    <property type="term" value="C:melanosome membrane"/>
    <property type="evidence" value="ECO:0007669"/>
    <property type="project" value="UniProtKB-SubCell"/>
</dbReference>
<dbReference type="GO" id="GO:0005886">
    <property type="term" value="C:plasma membrane"/>
    <property type="evidence" value="ECO:0007669"/>
    <property type="project" value="Ensembl"/>
</dbReference>
<dbReference type="GO" id="GO:0004167">
    <property type="term" value="F:dopachrome isomerase activity"/>
    <property type="evidence" value="ECO:0000314"/>
    <property type="project" value="UniProtKB"/>
</dbReference>
<dbReference type="GO" id="GO:0046872">
    <property type="term" value="F:metal ion binding"/>
    <property type="evidence" value="ECO:0007669"/>
    <property type="project" value="UniProtKB-KW"/>
</dbReference>
<dbReference type="GO" id="GO:0016491">
    <property type="term" value="F:oxidoreductase activity"/>
    <property type="evidence" value="ECO:0007669"/>
    <property type="project" value="InterPro"/>
</dbReference>
<dbReference type="GO" id="GO:0048468">
    <property type="term" value="P:cell development"/>
    <property type="evidence" value="ECO:0000315"/>
    <property type="project" value="MGI"/>
</dbReference>
<dbReference type="GO" id="GO:0048066">
    <property type="term" value="P:developmental pigmentation"/>
    <property type="evidence" value="ECO:0000315"/>
    <property type="project" value="MGI"/>
</dbReference>
<dbReference type="GO" id="GO:0042438">
    <property type="term" value="P:melanin biosynthetic process"/>
    <property type="evidence" value="ECO:0000315"/>
    <property type="project" value="MGI"/>
</dbReference>
<dbReference type="GO" id="GO:0006583">
    <property type="term" value="P:melanin biosynthetic process from tyrosine"/>
    <property type="evidence" value="ECO:0000314"/>
    <property type="project" value="UniProtKB"/>
</dbReference>
<dbReference type="GO" id="GO:0007405">
    <property type="term" value="P:neuroblast proliferation"/>
    <property type="evidence" value="ECO:0000315"/>
    <property type="project" value="MGI"/>
</dbReference>
<dbReference type="GO" id="GO:0043473">
    <property type="term" value="P:pigmentation"/>
    <property type="evidence" value="ECO:0000315"/>
    <property type="project" value="MGI"/>
</dbReference>
<dbReference type="GO" id="GO:0002052">
    <property type="term" value="P:positive regulation of neuroblast proliferation"/>
    <property type="evidence" value="ECO:0000315"/>
    <property type="project" value="MGI"/>
</dbReference>
<dbReference type="GO" id="GO:0009637">
    <property type="term" value="P:response to blue light"/>
    <property type="evidence" value="ECO:0000250"/>
    <property type="project" value="UniProtKB"/>
</dbReference>
<dbReference type="GO" id="GO:0021847">
    <property type="term" value="P:ventricular zone neuroblast division"/>
    <property type="evidence" value="ECO:0000315"/>
    <property type="project" value="MGI"/>
</dbReference>
<dbReference type="FunFam" id="1.10.1280.10:FF:000002">
    <property type="entry name" value="L-dopachrome tautomerase"/>
    <property type="match status" value="1"/>
</dbReference>
<dbReference type="Gene3D" id="1.10.1280.10">
    <property type="entry name" value="Di-copper center containing domain from catechol oxidase"/>
    <property type="match status" value="1"/>
</dbReference>
<dbReference type="InterPro" id="IPR008922">
    <property type="entry name" value="Di-copper_centre_dom_sf"/>
</dbReference>
<dbReference type="InterPro" id="IPR050316">
    <property type="entry name" value="Tyrosinase/Hemocyanin"/>
</dbReference>
<dbReference type="InterPro" id="IPR002227">
    <property type="entry name" value="Tyrosinase_Cu-bd"/>
</dbReference>
<dbReference type="PANTHER" id="PTHR11474:SF4">
    <property type="entry name" value="L-DOPACHROME TAUTOMERASE"/>
    <property type="match status" value="1"/>
</dbReference>
<dbReference type="PANTHER" id="PTHR11474">
    <property type="entry name" value="TYROSINASE FAMILY MEMBER"/>
    <property type="match status" value="1"/>
</dbReference>
<dbReference type="Pfam" id="PF00264">
    <property type="entry name" value="Tyrosinase"/>
    <property type="match status" value="1"/>
</dbReference>
<dbReference type="PRINTS" id="PR00092">
    <property type="entry name" value="TYROSINASE"/>
</dbReference>
<dbReference type="SUPFAM" id="SSF48056">
    <property type="entry name" value="Di-copper centre-containing domain"/>
    <property type="match status" value="1"/>
</dbReference>
<dbReference type="PROSITE" id="PS00497">
    <property type="entry name" value="TYROSINASE_1"/>
    <property type="match status" value="1"/>
</dbReference>
<dbReference type="PROSITE" id="PS00498">
    <property type="entry name" value="TYROSINASE_2"/>
    <property type="match status" value="1"/>
</dbReference>